<keyword id="KW-1048">Host nucleus</keyword>
<keyword id="KW-1185">Reference proteome</keyword>
<feature type="chain" id="PRO_0000438741" description="Protein E8^E2C">
    <location>
        <begin position="1"/>
        <end position="177"/>
    </location>
</feature>
<feature type="region of interest" description="Disordered" evidence="2">
    <location>
        <begin position="29"/>
        <end position="57"/>
    </location>
</feature>
<protein>
    <recommendedName>
        <fullName>Protein E8^E2C</fullName>
    </recommendedName>
</protein>
<accession>P0DKA1</accession>
<organism>
    <name type="scientific">Human papillomavirus 11</name>
    <dbReference type="NCBI Taxonomy" id="10580"/>
    <lineage>
        <taxon>Viruses</taxon>
        <taxon>Monodnaviria</taxon>
        <taxon>Shotokuvirae</taxon>
        <taxon>Cossaviricota</taxon>
        <taxon>Papovaviricetes</taxon>
        <taxon>Zurhausenvirales</taxon>
        <taxon>Papillomaviridae</taxon>
        <taxon>Firstpapillomavirinae</taxon>
        <taxon>Alphapapillomavirus</taxon>
        <taxon>Alphapapillomavirus 10</taxon>
    </lineage>
</organism>
<evidence type="ECO:0000250" key="1">
    <source>
        <dbReference type="UniProtKB" id="P0DKA0"/>
    </source>
</evidence>
<evidence type="ECO:0000256" key="2">
    <source>
        <dbReference type="SAM" id="MobiDB-lite"/>
    </source>
</evidence>
<evidence type="ECO:0000305" key="3"/>
<sequence length="177" mass="19948">MAILKWKLQRSTVREVSIAEPTTYTPAQTTAPTVSACTTEDGVSAPPRKRARGPSTNNTLCVANIRSVDSTINNIVTDNYNKHQRRNNCHSAATPIVQLQGDSNCLKCFRYRLNDKYKHLFELASSTWHWASPEAPHKNAIVTLTYSSEEQRQQFLNSVKIPPTIRHKVGFMSLHLL</sequence>
<organismHost>
    <name type="scientific">Homo sapiens</name>
    <name type="common">Human</name>
    <dbReference type="NCBI Taxonomy" id="9606"/>
</organismHost>
<dbReference type="EMBL" id="M14119">
    <property type="status" value="NOT_ANNOTATED_CDS"/>
    <property type="molecule type" value="Genomic_DNA"/>
</dbReference>
<dbReference type="SMR" id="P0DKA1"/>
<dbReference type="Proteomes" id="UP000008222">
    <property type="component" value="Genome"/>
</dbReference>
<dbReference type="GO" id="GO:0042025">
    <property type="term" value="C:host cell nucleus"/>
    <property type="evidence" value="ECO:0007669"/>
    <property type="project" value="UniProtKB-SubCell"/>
</dbReference>
<dbReference type="GO" id="GO:0003677">
    <property type="term" value="F:DNA binding"/>
    <property type="evidence" value="ECO:0007669"/>
    <property type="project" value="InterPro"/>
</dbReference>
<dbReference type="GO" id="GO:0003700">
    <property type="term" value="F:DNA-binding transcription factor activity"/>
    <property type="evidence" value="ECO:0007669"/>
    <property type="project" value="InterPro"/>
</dbReference>
<dbReference type="GO" id="GO:0006275">
    <property type="term" value="P:regulation of DNA replication"/>
    <property type="evidence" value="ECO:0007669"/>
    <property type="project" value="InterPro"/>
</dbReference>
<dbReference type="FunFam" id="3.30.70.330:FF:000918">
    <property type="entry name" value="Regulatory protein E2"/>
    <property type="match status" value="1"/>
</dbReference>
<dbReference type="Gene3D" id="3.30.70.330">
    <property type="match status" value="1"/>
</dbReference>
<dbReference type="InterPro" id="IPR035975">
    <property type="entry name" value="E2/EBNA1_C_sf"/>
</dbReference>
<dbReference type="InterPro" id="IPR012677">
    <property type="entry name" value="Nucleotide-bd_a/b_plait_sf"/>
</dbReference>
<dbReference type="InterPro" id="IPR000427">
    <property type="entry name" value="Papillomavirus_E2_C"/>
</dbReference>
<dbReference type="Pfam" id="PF00511">
    <property type="entry name" value="PPV_E2_C"/>
    <property type="match status" value="1"/>
</dbReference>
<dbReference type="SUPFAM" id="SSF54957">
    <property type="entry name" value="Viral DNA-binding domain"/>
    <property type="match status" value="1"/>
</dbReference>
<proteinExistence type="inferred from homology"/>
<name>VE8E2_HPV11</name>
<comment type="function">
    <text evidence="1">Plays a role in limiting the replication of viral DNA in keratinocytes. Recruits the host NCoR/SMRT complex to viral replication foci to mediate repression of both viral replication and transcription.</text>
</comment>
<comment type="subcellular location">
    <subcellularLocation>
        <location evidence="1">Host nucleus</location>
    </subcellularLocation>
</comment>
<comment type="similarity">
    <text evidence="3">Belongs to the papillomaviridae E8^E2C protein family.</text>
</comment>
<reference key="1">
    <citation type="journal article" date="1986" name="Virology">
        <title>The nucleotide sequence and genome organization of human papilloma virus type 11.</title>
        <authorList>
            <person name="Dartmann K."/>
            <person name="Schwarz E."/>
            <person name="Gissmann L."/>
            <person name="zur Hausen H."/>
        </authorList>
    </citation>
    <scope>NUCLEOTIDE SEQUENCE [GENOMIC DNA]</scope>
</reference>